<protein>
    <recommendedName>
        <fullName evidence="1">tRNA-cytidine(32) 2-sulfurtransferase</fullName>
        <ecNumber evidence="1">2.8.1.-</ecNumber>
    </recommendedName>
    <alternativeName>
        <fullName evidence="1">Two-thiocytidine biosynthesis protein A</fullName>
    </alternativeName>
    <alternativeName>
        <fullName evidence="1">tRNA 2-thiocytidine biosynthesis protein TtcA</fullName>
    </alternativeName>
</protein>
<feature type="chain" id="PRO_0000348862" description="tRNA-cytidine(32) 2-sulfurtransferase">
    <location>
        <begin position="1"/>
        <end position="310"/>
    </location>
</feature>
<feature type="short sequence motif" description="PP-loop motif" evidence="1">
    <location>
        <begin position="48"/>
        <end position="53"/>
    </location>
</feature>
<feature type="binding site" evidence="1">
    <location>
        <position position="123"/>
    </location>
    <ligand>
        <name>[4Fe-4S] cluster</name>
        <dbReference type="ChEBI" id="CHEBI:49883"/>
    </ligand>
</feature>
<feature type="binding site" evidence="1">
    <location>
        <position position="126"/>
    </location>
    <ligand>
        <name>[4Fe-4S] cluster</name>
        <dbReference type="ChEBI" id="CHEBI:49883"/>
    </ligand>
</feature>
<feature type="binding site" evidence="1">
    <location>
        <position position="214"/>
    </location>
    <ligand>
        <name>[4Fe-4S] cluster</name>
        <dbReference type="ChEBI" id="CHEBI:49883"/>
    </ligand>
</feature>
<gene>
    <name evidence="1" type="primary">ttcA</name>
    <name type="ordered locus">VC0395_A1043</name>
    <name type="ordered locus">VC395_1552</name>
</gene>
<dbReference type="EC" id="2.8.1.-" evidence="1"/>
<dbReference type="EMBL" id="CP000627">
    <property type="protein sequence ID" value="ABQ20829.1"/>
    <property type="molecule type" value="Genomic_DNA"/>
</dbReference>
<dbReference type="EMBL" id="CP001235">
    <property type="protein sequence ID" value="ACP09558.1"/>
    <property type="molecule type" value="Genomic_DNA"/>
</dbReference>
<dbReference type="RefSeq" id="WP_000126820.1">
    <property type="nucleotide sequence ID" value="NZ_JAACZH010000030.1"/>
</dbReference>
<dbReference type="SMR" id="A5F888"/>
<dbReference type="GeneID" id="69719897"/>
<dbReference type="KEGG" id="vco:VC0395_A1043"/>
<dbReference type="KEGG" id="vcr:VC395_1552"/>
<dbReference type="PATRIC" id="fig|345073.21.peg.1502"/>
<dbReference type="eggNOG" id="COG0037">
    <property type="taxonomic scope" value="Bacteria"/>
</dbReference>
<dbReference type="HOGENOM" id="CLU_026481_0_0_6"/>
<dbReference type="OrthoDB" id="9801054at2"/>
<dbReference type="Proteomes" id="UP000000249">
    <property type="component" value="Chromosome 2"/>
</dbReference>
<dbReference type="GO" id="GO:0005737">
    <property type="term" value="C:cytoplasm"/>
    <property type="evidence" value="ECO:0007669"/>
    <property type="project" value="UniProtKB-SubCell"/>
</dbReference>
<dbReference type="GO" id="GO:0051539">
    <property type="term" value="F:4 iron, 4 sulfur cluster binding"/>
    <property type="evidence" value="ECO:0007669"/>
    <property type="project" value="UniProtKB-UniRule"/>
</dbReference>
<dbReference type="GO" id="GO:0005524">
    <property type="term" value="F:ATP binding"/>
    <property type="evidence" value="ECO:0007669"/>
    <property type="project" value="UniProtKB-UniRule"/>
</dbReference>
<dbReference type="GO" id="GO:0000287">
    <property type="term" value="F:magnesium ion binding"/>
    <property type="evidence" value="ECO:0007669"/>
    <property type="project" value="UniProtKB-UniRule"/>
</dbReference>
<dbReference type="GO" id="GO:0016783">
    <property type="term" value="F:sulfurtransferase activity"/>
    <property type="evidence" value="ECO:0007669"/>
    <property type="project" value="UniProtKB-UniRule"/>
</dbReference>
<dbReference type="GO" id="GO:0000049">
    <property type="term" value="F:tRNA binding"/>
    <property type="evidence" value="ECO:0007669"/>
    <property type="project" value="UniProtKB-KW"/>
</dbReference>
<dbReference type="GO" id="GO:0034227">
    <property type="term" value="P:tRNA thio-modification"/>
    <property type="evidence" value="ECO:0007669"/>
    <property type="project" value="UniProtKB-UniRule"/>
</dbReference>
<dbReference type="CDD" id="cd24138">
    <property type="entry name" value="TtcA-like"/>
    <property type="match status" value="1"/>
</dbReference>
<dbReference type="Gene3D" id="3.40.50.620">
    <property type="entry name" value="HUPs"/>
    <property type="match status" value="1"/>
</dbReference>
<dbReference type="HAMAP" id="MF_01850">
    <property type="entry name" value="TtcA"/>
    <property type="match status" value="1"/>
</dbReference>
<dbReference type="InterPro" id="IPR014729">
    <property type="entry name" value="Rossmann-like_a/b/a_fold"/>
</dbReference>
<dbReference type="InterPro" id="IPR011063">
    <property type="entry name" value="TilS/TtcA_N"/>
</dbReference>
<dbReference type="InterPro" id="IPR012089">
    <property type="entry name" value="tRNA_Cyd_32_2_STrfase"/>
</dbReference>
<dbReference type="InterPro" id="IPR035107">
    <property type="entry name" value="tRNA_thiolation_TtcA_Ctu1"/>
</dbReference>
<dbReference type="NCBIfam" id="NF007972">
    <property type="entry name" value="PRK10696.1"/>
    <property type="match status" value="1"/>
</dbReference>
<dbReference type="PANTHER" id="PTHR43686:SF1">
    <property type="entry name" value="AMINOTRAN_5 DOMAIN-CONTAINING PROTEIN"/>
    <property type="match status" value="1"/>
</dbReference>
<dbReference type="PANTHER" id="PTHR43686">
    <property type="entry name" value="SULFURTRANSFERASE-RELATED"/>
    <property type="match status" value="1"/>
</dbReference>
<dbReference type="Pfam" id="PF01171">
    <property type="entry name" value="ATP_bind_3"/>
    <property type="match status" value="1"/>
</dbReference>
<dbReference type="PIRSF" id="PIRSF004976">
    <property type="entry name" value="ATPase_YdaO"/>
    <property type="match status" value="1"/>
</dbReference>
<dbReference type="SUPFAM" id="SSF52402">
    <property type="entry name" value="Adenine nucleotide alpha hydrolases-like"/>
    <property type="match status" value="1"/>
</dbReference>
<accession>A5F888</accession>
<accession>C3M0J2</accession>
<sequence length="310" mass="35122">MTAQTQELTKAQQYNFNKLQKRIRRNTGQAIADFNMIEDGDRIMVCLSGGKDSFTMLDILMSLQKSAPISFELVAVNLDQKQPGFPEHVLPEYLDSLGVEYKIVEEDTYSIVQDKVPEGKTTCALCSRLRRGILYRTAKELGATKIALGHHRDDILETLFLNMFYGGKMKGMPPKLVSDNGEHVVIRPLAYCREKDIIKYSDMRGYPIIPCNLCGSQPNLQRQAVKQMLNDWDKRFPGRIETMFRAMQNVVPSHLADFSLFDFKSIDKNSGVINGGDIGFDKEEIAPQVVEDEDLVMEFDPSLQLNVTNI</sequence>
<proteinExistence type="inferred from homology"/>
<evidence type="ECO:0000255" key="1">
    <source>
        <dbReference type="HAMAP-Rule" id="MF_01850"/>
    </source>
</evidence>
<comment type="function">
    <text evidence="1">Catalyzes the ATP-dependent 2-thiolation of cytidine in position 32 of tRNA, to form 2-thiocytidine (s(2)C32). The sulfur atoms are provided by the cysteine/cysteine desulfurase (IscS) system.</text>
</comment>
<comment type="catalytic activity">
    <reaction evidence="1">
        <text>cytidine(32) in tRNA + S-sulfanyl-L-cysteinyl-[cysteine desulfurase] + AH2 + ATP = 2-thiocytidine(32) in tRNA + L-cysteinyl-[cysteine desulfurase] + A + AMP + diphosphate + H(+)</text>
        <dbReference type="Rhea" id="RHEA:57048"/>
        <dbReference type="Rhea" id="RHEA-COMP:10288"/>
        <dbReference type="Rhea" id="RHEA-COMP:12157"/>
        <dbReference type="Rhea" id="RHEA-COMP:12158"/>
        <dbReference type="Rhea" id="RHEA-COMP:14821"/>
        <dbReference type="ChEBI" id="CHEBI:13193"/>
        <dbReference type="ChEBI" id="CHEBI:15378"/>
        <dbReference type="ChEBI" id="CHEBI:17499"/>
        <dbReference type="ChEBI" id="CHEBI:29950"/>
        <dbReference type="ChEBI" id="CHEBI:30616"/>
        <dbReference type="ChEBI" id="CHEBI:33019"/>
        <dbReference type="ChEBI" id="CHEBI:61963"/>
        <dbReference type="ChEBI" id="CHEBI:82748"/>
        <dbReference type="ChEBI" id="CHEBI:141453"/>
        <dbReference type="ChEBI" id="CHEBI:456215"/>
    </reaction>
    <physiologicalReaction direction="left-to-right" evidence="1">
        <dbReference type="Rhea" id="RHEA:57049"/>
    </physiologicalReaction>
</comment>
<comment type="cofactor">
    <cofactor evidence="1">
        <name>Mg(2+)</name>
        <dbReference type="ChEBI" id="CHEBI:18420"/>
    </cofactor>
</comment>
<comment type="cofactor">
    <cofactor evidence="1">
        <name>[4Fe-4S] cluster</name>
        <dbReference type="ChEBI" id="CHEBI:49883"/>
    </cofactor>
    <text evidence="1">Binds 1 [4Fe-4S] cluster per subunit. The cluster is chelated by three Cys residues, the fourth Fe has a free coordination site that may bind a sulfur atom transferred from the persulfide of IscS.</text>
</comment>
<comment type="pathway">
    <text evidence="1">tRNA modification.</text>
</comment>
<comment type="subunit">
    <text evidence="1">Homodimer.</text>
</comment>
<comment type="subcellular location">
    <subcellularLocation>
        <location evidence="1">Cytoplasm</location>
    </subcellularLocation>
</comment>
<comment type="miscellaneous">
    <text evidence="1">The thiolation reaction likely consists of two steps: a first activation step by ATP to form an adenylated intermediate of the target base of tRNA, and a second nucleophilic substitution step of the sulfur (S) atom supplied by the hydrosulfide attached to the Fe-S cluster.</text>
</comment>
<comment type="similarity">
    <text evidence="1">Belongs to the TtcA family.</text>
</comment>
<organism>
    <name type="scientific">Vibrio cholerae serotype O1 (strain ATCC 39541 / Classical Ogawa 395 / O395)</name>
    <dbReference type="NCBI Taxonomy" id="345073"/>
    <lineage>
        <taxon>Bacteria</taxon>
        <taxon>Pseudomonadati</taxon>
        <taxon>Pseudomonadota</taxon>
        <taxon>Gammaproteobacteria</taxon>
        <taxon>Vibrionales</taxon>
        <taxon>Vibrionaceae</taxon>
        <taxon>Vibrio</taxon>
    </lineage>
</organism>
<reference key="1">
    <citation type="submission" date="2007-03" db="EMBL/GenBank/DDBJ databases">
        <authorList>
            <person name="Heidelberg J."/>
        </authorList>
    </citation>
    <scope>NUCLEOTIDE SEQUENCE [LARGE SCALE GENOMIC DNA]</scope>
    <source>
        <strain>ATCC 39541 / Classical Ogawa 395 / O395</strain>
    </source>
</reference>
<reference key="2">
    <citation type="journal article" date="2008" name="PLoS ONE">
        <title>A recalibrated molecular clock and independent origins for the cholera pandemic clones.</title>
        <authorList>
            <person name="Feng L."/>
            <person name="Reeves P.R."/>
            <person name="Lan R."/>
            <person name="Ren Y."/>
            <person name="Gao C."/>
            <person name="Zhou Z."/>
            <person name="Ren Y."/>
            <person name="Cheng J."/>
            <person name="Wang W."/>
            <person name="Wang J."/>
            <person name="Qian W."/>
            <person name="Li D."/>
            <person name="Wang L."/>
        </authorList>
    </citation>
    <scope>NUCLEOTIDE SEQUENCE [LARGE SCALE GENOMIC DNA]</scope>
    <source>
        <strain>ATCC 39541 / Classical Ogawa 395 / O395</strain>
    </source>
</reference>
<keyword id="KW-0004">4Fe-4S</keyword>
<keyword id="KW-0067">ATP-binding</keyword>
<keyword id="KW-0963">Cytoplasm</keyword>
<keyword id="KW-0408">Iron</keyword>
<keyword id="KW-0411">Iron-sulfur</keyword>
<keyword id="KW-0460">Magnesium</keyword>
<keyword id="KW-0479">Metal-binding</keyword>
<keyword id="KW-0547">Nucleotide-binding</keyword>
<keyword id="KW-0694">RNA-binding</keyword>
<keyword id="KW-0808">Transferase</keyword>
<keyword id="KW-0819">tRNA processing</keyword>
<keyword id="KW-0820">tRNA-binding</keyword>
<name>TTCA_VIBC3</name>